<accession>Q00334</accession>
<name>PG079_VACCP</name>
<proteinExistence type="inferred from homology"/>
<reference key="1">
    <citation type="journal article" date="1990" name="Mol. Biol. (Mosk.)">
        <title>Molecular-biological study of vaccinia virus genome. II. Localization and nucleotide sequence of vaccinia virus genes coding for proteins 36K and 12K.</title>
        <authorList>
            <person name="Riazankina O.I."/>
            <person name="Shchelkunov S.N."/>
            <person name="Muravlev A.I."/>
            <person name="Netesova N.A."/>
            <person name="Mikriukov N.N."/>
            <person name="Gutorov V.V."/>
            <person name="Nikulin A.E."/>
            <person name="Kulichkov V.A."/>
            <person name="Malygin E.G."/>
        </authorList>
    </citation>
    <scope>NUCLEOTIDE SEQUENCE [GENOMIC DNA]</scope>
</reference>
<protein>
    <recommendedName>
        <fullName>Truncated protein OPG079</fullName>
    </recommendedName>
    <alternativeName>
        <fullName>Truncated protein I3</fullName>
    </alternativeName>
</protein>
<organism>
    <name type="scientific">Vaccinia virus (strain L-IVP)</name>
    <name type="common">VACV</name>
    <dbReference type="NCBI Taxonomy" id="31531"/>
    <lineage>
        <taxon>Viruses</taxon>
        <taxon>Varidnaviria</taxon>
        <taxon>Bamfordvirae</taxon>
        <taxon>Nucleocytoviricota</taxon>
        <taxon>Pokkesviricetes</taxon>
        <taxon>Chitovirales</taxon>
        <taxon>Poxviridae</taxon>
        <taxon>Chordopoxvirinae</taxon>
        <taxon>Orthopoxvirus</taxon>
        <taxon>Vaccinia virus</taxon>
    </lineage>
</organism>
<comment type="function">
    <text evidence="1">Plays an essential role in viral DNA replication. Binds to ssDNA with high affinity and localizes to cytoplasmic factories where nascent viral genomes accumulate. May disrupt loops, hairpins and other secondary structures present on ssDNA to reduce and eliminate pausing of viral DNA polymerase at specific sites during elongation.</text>
</comment>
<comment type="subunit">
    <text evidence="1">Homoomultimer (Potential). Interacts with the small subunit of ribonucleotide reductase (By similarity). Interacts with host FAM111A; this interaction protomtes OPG079 degradation through autophagy (By similarity).</text>
</comment>
<comment type="subcellular location">
    <subcellularLocation>
        <location evidence="1">Host cytoplasm</location>
    </subcellularLocation>
    <text evidence="1">Localizes in cytoplasmic virus factories, where it is associated with viral DNA.</text>
</comment>
<comment type="induction">
    <text evidence="1">Expressed in the early phase of the viral replicative cycle.</text>
</comment>
<comment type="miscellaneous">
    <text>This protein is synthesized in the early as well as at the intermediate time of infection.</text>
</comment>
<comment type="similarity">
    <text evidence="2">Belongs to the orthopoxvirus OPG079 family.</text>
</comment>
<organismHost>
    <name type="scientific">Homo sapiens</name>
    <name type="common">Human</name>
    <dbReference type="NCBI Taxonomy" id="9606"/>
</organismHost>
<keyword id="KW-0226">DNA condensation</keyword>
<keyword id="KW-0238">DNA-binding</keyword>
<keyword id="KW-0244">Early protein</keyword>
<keyword id="KW-1035">Host cytoplasm</keyword>
<evidence type="ECO:0000250" key="1">
    <source>
        <dbReference type="UniProtKB" id="P12923"/>
    </source>
</evidence>
<evidence type="ECO:0000305" key="2"/>
<feature type="chain" id="PRO_0000099572" description="Truncated protein OPG079">
    <location>
        <begin position="1" status="less than"/>
        <end position="28"/>
    </location>
</feature>
<feature type="non-terminal residue">
    <location>
        <position position="1"/>
    </location>
</feature>
<gene>
    <name type="primary">OPG079</name>
    <name type="ORF">I3L</name>
</gene>
<dbReference type="EMBL" id="X61165">
    <property type="protein sequence ID" value="CAA43473.1"/>
    <property type="molecule type" value="Genomic_DNA"/>
</dbReference>
<dbReference type="GO" id="GO:0030430">
    <property type="term" value="C:host cell cytoplasm"/>
    <property type="evidence" value="ECO:0007669"/>
    <property type="project" value="UniProtKB-SubCell"/>
</dbReference>
<dbReference type="GO" id="GO:0003677">
    <property type="term" value="F:DNA binding"/>
    <property type="evidence" value="ECO:0007669"/>
    <property type="project" value="UniProtKB-KW"/>
</dbReference>
<dbReference type="GO" id="GO:0030261">
    <property type="term" value="P:chromosome condensation"/>
    <property type="evidence" value="ECO:0007669"/>
    <property type="project" value="UniProtKB-KW"/>
</dbReference>
<sequence length="28" mass="3238">DLARNLGLVDIDDEYDEDSDKEKPIFNV</sequence>